<gene>
    <name type="primary">NEUROG3</name>
    <name type="synonym">ATOH5</name>
    <name type="synonym">BHLHA7</name>
    <name type="synonym">NGN3</name>
</gene>
<feature type="chain" id="PRO_0000127402" description="Neurogenin-3">
    <location>
        <begin position="1"/>
        <end position="214"/>
    </location>
</feature>
<feature type="domain" description="bHLH" evidence="3">
    <location>
        <begin position="83"/>
        <end position="135"/>
    </location>
</feature>
<feature type="region of interest" description="Disordered" evidence="4">
    <location>
        <begin position="1"/>
        <end position="98"/>
    </location>
</feature>
<feature type="compositionally biased region" description="Polar residues" evidence="4">
    <location>
        <begin position="1"/>
        <end position="14"/>
    </location>
</feature>
<feature type="compositionally biased region" description="Basic and acidic residues" evidence="4">
    <location>
        <begin position="15"/>
        <end position="26"/>
    </location>
</feature>
<feature type="compositionally biased region" description="Basic residues" evidence="4">
    <location>
        <begin position="57"/>
        <end position="70"/>
    </location>
</feature>
<feature type="compositionally biased region" description="Basic residues" evidence="4">
    <location>
        <begin position="79"/>
        <end position="88"/>
    </location>
</feature>
<feature type="sequence variant" id="VAR_029003" description="In DIAR4; attenuated NEUROG3 function in vivo; dbSNP:rs121917838." evidence="6">
    <original>R</original>
    <variation>L</variation>
    <location>
        <position position="93"/>
    </location>
</feature>
<feature type="sequence variant" id="VAR_029004" description="In DIAR4; attenuated NEUROG3 function in vivo; dbSNP:rs121917837." evidence="6">
    <original>R</original>
    <variation>S</variation>
    <location>
        <position position="107"/>
    </location>
</feature>
<feature type="sequence variant" id="VAR_055316" description="In dbSNP:rs4536103." evidence="5 7 8">
    <original>F</original>
    <variation>S</variation>
    <location>
        <position position="199"/>
    </location>
</feature>
<feature type="sequence conflict" description="In Ref. 1; CAB45384." evidence="9" ref="1">
    <original>R</original>
    <variation>P</variation>
    <location>
        <position position="43"/>
    </location>
</feature>
<feature type="sequence conflict" description="In Ref. 1; CAB45384." evidence="9" ref="1">
    <original>N</original>
    <variation>D</variation>
    <location>
        <position position="98"/>
    </location>
</feature>
<feature type="sequence conflict" description="In Ref. 1; CAB45384." evidence="9" ref="1">
    <original>S</original>
    <variation>P</variation>
    <location>
        <position position="165"/>
    </location>
</feature>
<keyword id="KW-0010">Activator</keyword>
<keyword id="KW-0217">Developmental protein</keyword>
<keyword id="KW-0221">Differentiation</keyword>
<keyword id="KW-0225">Disease variant</keyword>
<keyword id="KW-0238">DNA-binding</keyword>
<keyword id="KW-0524">Neurogenesis</keyword>
<keyword id="KW-0539">Nucleus</keyword>
<keyword id="KW-1185">Reference proteome</keyword>
<keyword id="KW-0804">Transcription</keyword>
<keyword id="KW-0805">Transcription regulation</keyword>
<proteinExistence type="evidence at protein level"/>
<reference key="1">
    <citation type="submission" date="1999-03" db="EMBL/GenBank/DDBJ databases">
        <title>The human neurogenin 3 homolog maps to chromosome 10q21.3 and its expression pattern is identical to that of its murine counterparts.</title>
        <authorList>
            <person name="Ravassard P."/>
            <person name="Icard-Liepkalns C."/>
            <person name="Wiard L."/>
            <person name="Julien J.P."/>
            <person name="Mallet J."/>
        </authorList>
    </citation>
    <scope>NUCLEOTIDE SEQUENCE [GENOMIC DNA]</scope>
    <scope>VARIANT SER-199</scope>
</reference>
<reference key="2">
    <citation type="submission" date="2000-02" db="EMBL/GenBank/DDBJ databases">
        <title>Beta-cell transcription factors and diabetes: no evidence for diabetes-associated mutations in the coding region of the proendocrine neurogenin 3 gene (NEUROG3) in Japanese patients with MODY.</title>
        <authorList>
            <person name="del Bosque-Plata L."/>
            <person name="Lin J."/>
            <person name="Horikawa Y."/>
            <person name="Schwarz P.E.H."/>
            <person name="Cox N.J."/>
            <person name="Iwasaki N."/>
            <person name="Iwamoto Y."/>
            <person name="German M."/>
            <person name="Bell G."/>
        </authorList>
    </citation>
    <scope>NUCLEOTIDE SEQUENCE [GENOMIC DNA]</scope>
    <scope>VARIANT SER-199</scope>
</reference>
<reference key="3">
    <citation type="journal article" date="2004" name="Nat. Genet.">
        <title>Complete sequencing and characterization of 21,243 full-length human cDNAs.</title>
        <authorList>
            <person name="Ota T."/>
            <person name="Suzuki Y."/>
            <person name="Nishikawa T."/>
            <person name="Otsuki T."/>
            <person name="Sugiyama T."/>
            <person name="Irie R."/>
            <person name="Wakamatsu A."/>
            <person name="Hayashi K."/>
            <person name="Sato H."/>
            <person name="Nagai K."/>
            <person name="Kimura K."/>
            <person name="Makita H."/>
            <person name="Sekine M."/>
            <person name="Obayashi M."/>
            <person name="Nishi T."/>
            <person name="Shibahara T."/>
            <person name="Tanaka T."/>
            <person name="Ishii S."/>
            <person name="Yamamoto J."/>
            <person name="Saito K."/>
            <person name="Kawai Y."/>
            <person name="Isono Y."/>
            <person name="Nakamura Y."/>
            <person name="Nagahari K."/>
            <person name="Murakami K."/>
            <person name="Yasuda T."/>
            <person name="Iwayanagi T."/>
            <person name="Wagatsuma M."/>
            <person name="Shiratori A."/>
            <person name="Sudo H."/>
            <person name="Hosoiri T."/>
            <person name="Kaku Y."/>
            <person name="Kodaira H."/>
            <person name="Kondo H."/>
            <person name="Sugawara M."/>
            <person name="Takahashi M."/>
            <person name="Kanda K."/>
            <person name="Yokoi T."/>
            <person name="Furuya T."/>
            <person name="Kikkawa E."/>
            <person name="Omura Y."/>
            <person name="Abe K."/>
            <person name="Kamihara K."/>
            <person name="Katsuta N."/>
            <person name="Sato K."/>
            <person name="Tanikawa M."/>
            <person name="Yamazaki M."/>
            <person name="Ninomiya K."/>
            <person name="Ishibashi T."/>
            <person name="Yamashita H."/>
            <person name="Murakawa K."/>
            <person name="Fujimori K."/>
            <person name="Tanai H."/>
            <person name="Kimata M."/>
            <person name="Watanabe M."/>
            <person name="Hiraoka S."/>
            <person name="Chiba Y."/>
            <person name="Ishida S."/>
            <person name="Ono Y."/>
            <person name="Takiguchi S."/>
            <person name="Watanabe S."/>
            <person name="Yosida M."/>
            <person name="Hotuta T."/>
            <person name="Kusano J."/>
            <person name="Kanehori K."/>
            <person name="Takahashi-Fujii A."/>
            <person name="Hara H."/>
            <person name="Tanase T.-O."/>
            <person name="Nomura Y."/>
            <person name="Togiya S."/>
            <person name="Komai F."/>
            <person name="Hara R."/>
            <person name="Takeuchi K."/>
            <person name="Arita M."/>
            <person name="Imose N."/>
            <person name="Musashino K."/>
            <person name="Yuuki H."/>
            <person name="Oshima A."/>
            <person name="Sasaki N."/>
            <person name="Aotsuka S."/>
            <person name="Yoshikawa Y."/>
            <person name="Matsunawa H."/>
            <person name="Ichihara T."/>
            <person name="Shiohata N."/>
            <person name="Sano S."/>
            <person name="Moriya S."/>
            <person name="Momiyama H."/>
            <person name="Satoh N."/>
            <person name="Takami S."/>
            <person name="Terashima Y."/>
            <person name="Suzuki O."/>
            <person name="Nakagawa S."/>
            <person name="Senoh A."/>
            <person name="Mizoguchi H."/>
            <person name="Goto Y."/>
            <person name="Shimizu F."/>
            <person name="Wakebe H."/>
            <person name="Hishigaki H."/>
            <person name="Watanabe T."/>
            <person name="Sugiyama A."/>
            <person name="Takemoto M."/>
            <person name="Kawakami B."/>
            <person name="Yamazaki M."/>
            <person name="Watanabe K."/>
            <person name="Kumagai A."/>
            <person name="Itakura S."/>
            <person name="Fukuzumi Y."/>
            <person name="Fujimori Y."/>
            <person name="Komiyama M."/>
            <person name="Tashiro H."/>
            <person name="Tanigami A."/>
            <person name="Fujiwara T."/>
            <person name="Ono T."/>
            <person name="Yamada K."/>
            <person name="Fujii Y."/>
            <person name="Ozaki K."/>
            <person name="Hirao M."/>
            <person name="Ohmori Y."/>
            <person name="Kawabata A."/>
            <person name="Hikiji T."/>
            <person name="Kobatake N."/>
            <person name="Inagaki H."/>
            <person name="Ikema Y."/>
            <person name="Okamoto S."/>
            <person name="Okitani R."/>
            <person name="Kawakami T."/>
            <person name="Noguchi S."/>
            <person name="Itoh T."/>
            <person name="Shigeta K."/>
            <person name="Senba T."/>
            <person name="Matsumura K."/>
            <person name="Nakajima Y."/>
            <person name="Mizuno T."/>
            <person name="Morinaga M."/>
            <person name="Sasaki M."/>
            <person name="Togashi T."/>
            <person name="Oyama M."/>
            <person name="Hata H."/>
            <person name="Watanabe M."/>
            <person name="Komatsu T."/>
            <person name="Mizushima-Sugano J."/>
            <person name="Satoh T."/>
            <person name="Shirai Y."/>
            <person name="Takahashi Y."/>
            <person name="Nakagawa K."/>
            <person name="Okumura K."/>
            <person name="Nagase T."/>
            <person name="Nomura N."/>
            <person name="Kikuchi H."/>
            <person name="Masuho Y."/>
            <person name="Yamashita R."/>
            <person name="Nakai K."/>
            <person name="Yada T."/>
            <person name="Nakamura Y."/>
            <person name="Ohara O."/>
            <person name="Isogai T."/>
            <person name="Sugano S."/>
        </authorList>
    </citation>
    <scope>NUCLEOTIDE SEQUENCE [LARGE SCALE MRNA]</scope>
    <source>
        <tissue>Rectum</tissue>
    </source>
</reference>
<reference key="4">
    <citation type="journal article" date="2004" name="Nature">
        <title>The DNA sequence and comparative analysis of human chromosome 10.</title>
        <authorList>
            <person name="Deloukas P."/>
            <person name="Earthrowl M.E."/>
            <person name="Grafham D.V."/>
            <person name="Rubenfield M."/>
            <person name="French L."/>
            <person name="Steward C.A."/>
            <person name="Sims S.K."/>
            <person name="Jones M.C."/>
            <person name="Searle S."/>
            <person name="Scott C."/>
            <person name="Howe K."/>
            <person name="Hunt S.E."/>
            <person name="Andrews T.D."/>
            <person name="Gilbert J.G.R."/>
            <person name="Swarbreck D."/>
            <person name="Ashurst J.L."/>
            <person name="Taylor A."/>
            <person name="Battles J."/>
            <person name="Bird C.P."/>
            <person name="Ainscough R."/>
            <person name="Almeida J.P."/>
            <person name="Ashwell R.I.S."/>
            <person name="Ambrose K.D."/>
            <person name="Babbage A.K."/>
            <person name="Bagguley C.L."/>
            <person name="Bailey J."/>
            <person name="Banerjee R."/>
            <person name="Bates K."/>
            <person name="Beasley H."/>
            <person name="Bray-Allen S."/>
            <person name="Brown A.J."/>
            <person name="Brown J.Y."/>
            <person name="Burford D.C."/>
            <person name="Burrill W."/>
            <person name="Burton J."/>
            <person name="Cahill P."/>
            <person name="Camire D."/>
            <person name="Carter N.P."/>
            <person name="Chapman J.C."/>
            <person name="Clark S.Y."/>
            <person name="Clarke G."/>
            <person name="Clee C.M."/>
            <person name="Clegg S."/>
            <person name="Corby N."/>
            <person name="Coulson A."/>
            <person name="Dhami P."/>
            <person name="Dutta I."/>
            <person name="Dunn M."/>
            <person name="Faulkner L."/>
            <person name="Frankish A."/>
            <person name="Frankland J.A."/>
            <person name="Garner P."/>
            <person name="Garnett J."/>
            <person name="Gribble S."/>
            <person name="Griffiths C."/>
            <person name="Grocock R."/>
            <person name="Gustafson E."/>
            <person name="Hammond S."/>
            <person name="Harley J.L."/>
            <person name="Hart E."/>
            <person name="Heath P.D."/>
            <person name="Ho T.P."/>
            <person name="Hopkins B."/>
            <person name="Horne J."/>
            <person name="Howden P.J."/>
            <person name="Huckle E."/>
            <person name="Hynds C."/>
            <person name="Johnson C."/>
            <person name="Johnson D."/>
            <person name="Kana A."/>
            <person name="Kay M."/>
            <person name="Kimberley A.M."/>
            <person name="Kershaw J.K."/>
            <person name="Kokkinaki M."/>
            <person name="Laird G.K."/>
            <person name="Lawlor S."/>
            <person name="Lee H.M."/>
            <person name="Leongamornlert D.A."/>
            <person name="Laird G."/>
            <person name="Lloyd C."/>
            <person name="Lloyd D.M."/>
            <person name="Loveland J."/>
            <person name="Lovell J."/>
            <person name="McLaren S."/>
            <person name="McLay K.E."/>
            <person name="McMurray A."/>
            <person name="Mashreghi-Mohammadi M."/>
            <person name="Matthews L."/>
            <person name="Milne S."/>
            <person name="Nickerson T."/>
            <person name="Nguyen M."/>
            <person name="Overton-Larty E."/>
            <person name="Palmer S.A."/>
            <person name="Pearce A.V."/>
            <person name="Peck A.I."/>
            <person name="Pelan S."/>
            <person name="Phillimore B."/>
            <person name="Porter K."/>
            <person name="Rice C.M."/>
            <person name="Rogosin A."/>
            <person name="Ross M.T."/>
            <person name="Sarafidou T."/>
            <person name="Sehra H.K."/>
            <person name="Shownkeen R."/>
            <person name="Skuce C.D."/>
            <person name="Smith M."/>
            <person name="Standring L."/>
            <person name="Sycamore N."/>
            <person name="Tester J."/>
            <person name="Thorpe A."/>
            <person name="Torcasso W."/>
            <person name="Tracey A."/>
            <person name="Tromans A."/>
            <person name="Tsolas J."/>
            <person name="Wall M."/>
            <person name="Walsh J."/>
            <person name="Wang H."/>
            <person name="Weinstock K."/>
            <person name="West A.P."/>
            <person name="Willey D.L."/>
            <person name="Whitehead S.L."/>
            <person name="Wilming L."/>
            <person name="Wray P.W."/>
            <person name="Young L."/>
            <person name="Chen Y."/>
            <person name="Lovering R.C."/>
            <person name="Moschonas N.K."/>
            <person name="Siebert R."/>
            <person name="Fechtel K."/>
            <person name="Bentley D."/>
            <person name="Durbin R.M."/>
            <person name="Hubbard T."/>
            <person name="Doucette-Stamm L."/>
            <person name="Beck S."/>
            <person name="Smith D.R."/>
            <person name="Rogers J."/>
        </authorList>
    </citation>
    <scope>NUCLEOTIDE SEQUENCE [LARGE SCALE GENOMIC DNA]</scope>
</reference>
<reference key="5">
    <citation type="submission" date="2005-07" db="EMBL/GenBank/DDBJ databases">
        <authorList>
            <person name="Mural R.J."/>
            <person name="Istrail S."/>
            <person name="Sutton G.G."/>
            <person name="Florea L."/>
            <person name="Halpern A.L."/>
            <person name="Mobarry C.M."/>
            <person name="Lippert R."/>
            <person name="Walenz B."/>
            <person name="Shatkay H."/>
            <person name="Dew I."/>
            <person name="Miller J.R."/>
            <person name="Flanigan M.J."/>
            <person name="Edwards N.J."/>
            <person name="Bolanos R."/>
            <person name="Fasulo D."/>
            <person name="Halldorsson B.V."/>
            <person name="Hannenhalli S."/>
            <person name="Turner R."/>
            <person name="Yooseph S."/>
            <person name="Lu F."/>
            <person name="Nusskern D.R."/>
            <person name="Shue B.C."/>
            <person name="Zheng X.H."/>
            <person name="Zhong F."/>
            <person name="Delcher A.L."/>
            <person name="Huson D.H."/>
            <person name="Kravitz S.A."/>
            <person name="Mouchard L."/>
            <person name="Reinert K."/>
            <person name="Remington K.A."/>
            <person name="Clark A.G."/>
            <person name="Waterman M.S."/>
            <person name="Eichler E.E."/>
            <person name="Adams M.D."/>
            <person name="Hunkapiller M.W."/>
            <person name="Myers E.W."/>
            <person name="Venter J.C."/>
        </authorList>
    </citation>
    <scope>NUCLEOTIDE SEQUENCE [LARGE SCALE GENOMIC DNA]</scope>
</reference>
<reference key="6">
    <citation type="journal article" date="2004" name="Genome Res.">
        <title>The status, quality, and expansion of the NIH full-length cDNA project: the Mammalian Gene Collection (MGC).</title>
        <authorList>
            <consortium name="The MGC Project Team"/>
        </authorList>
    </citation>
    <scope>NUCLEOTIDE SEQUENCE [LARGE SCALE MRNA]</scope>
    <scope>VARIANT SER-199</scope>
</reference>
<reference key="7">
    <citation type="journal article" date="2006" name="N. Engl. J. Med.">
        <title>Mutant neurogenin-3 in congenital malabsorptive diarrhea.</title>
        <authorList>
            <person name="Wang J."/>
            <person name="Cortina G."/>
            <person name="Wu S.V."/>
            <person name="Tran R."/>
            <person name="Cho J.-H."/>
            <person name="Tsai M.-J."/>
            <person name="Bailey T.J."/>
            <person name="Jamrich M."/>
            <person name="Ament M.E."/>
            <person name="Treem W.R."/>
            <person name="Hill I.D."/>
            <person name="Vargas J.H."/>
            <person name="Gershman G."/>
            <person name="Farmer D.G."/>
            <person name="Reyen L."/>
            <person name="Martin M.G."/>
        </authorList>
    </citation>
    <scope>VARIANTS DIAR4 LEU-93 AND SER-107</scope>
    <scope>CHARACTERIZATION OF VARIANTS DIAR4 LEU-93 AND SER-107</scope>
</reference>
<sequence>MTPQPSGAPTVQVTRETERSFPRASEDEVTCPTSAPPSPTRTRGNCAEAEEGGCRGAPRKLRARRGGRSRPKSELALSKQRRSRRKKANDRERNRMHNLNSALDALRGVLPTFPDDAKLTKIETLRFAHNYIWALTQTLRIADHSLYALEPPAPHCGELGSPGGSPGDWGSLYSPVSQAGSLSPAASLEERPGLLGATFSACLSPGSLAFSDFL</sequence>
<comment type="function">
    <text evidence="1">Acts as a transcriptional regulator. Together with NKX2-2, initiates transcriptional activation of NEUROD1. Involved in neurogenesis. Also required for the specification of a common precursor of the 4 pancreatic endocrine cell types (By similarity).</text>
</comment>
<comment type="subunit">
    <text evidence="1 2">Efficient DNA binding requires dimerization with another bHLH protein. Interacts with ATOH8.</text>
</comment>
<comment type="interaction">
    <interactant intactId="EBI-10328570">
        <id>Q9Y4Z2</id>
    </interactant>
    <interactant intactId="EBI-12029004">
        <id>P78424</id>
        <label>POU6F2</label>
    </interactant>
    <organismsDiffer>false</organismsDiffer>
    <experiments>3</experiments>
</comment>
<comment type="interaction">
    <interactant intactId="EBI-10328570">
        <id>Q9Y4Z2</id>
    </interactant>
    <interactant intactId="EBI-307352">
        <id>Q04864</id>
        <label>REL</label>
    </interactant>
    <organismsDiffer>false</organismsDiffer>
    <experiments>3</experiments>
</comment>
<comment type="interaction">
    <interactant intactId="EBI-10328570">
        <id>Q9Y4Z2</id>
    </interactant>
    <interactant intactId="EBI-722877">
        <id>Q99081</id>
        <label>TCF12</label>
    </interactant>
    <organismsDiffer>false</organismsDiffer>
    <experiments>6</experiments>
</comment>
<comment type="interaction">
    <interactant intactId="EBI-10328570">
        <id>Q9Y4Z2</id>
    </interactant>
    <interactant intactId="EBI-11952764">
        <id>Q99081-3</id>
        <label>TCF12</label>
    </interactant>
    <organismsDiffer>false</organismsDiffer>
    <experiments>7</experiments>
</comment>
<comment type="interaction">
    <interactant intactId="EBI-10328570">
        <id>Q9Y4Z2</id>
    </interactant>
    <interactant intactId="EBI-13636688">
        <id>P15884-3</id>
        <label>TCF4</label>
    </interactant>
    <organismsDiffer>false</organismsDiffer>
    <experiments>4</experiments>
</comment>
<comment type="subcellular location">
    <subcellularLocation>
        <location evidence="3">Nucleus</location>
    </subcellularLocation>
</comment>
<comment type="disease" evidence="6">
    <disease id="DI-01408">
        <name>Diarrhea 4, malabsorptive, congenital</name>
        <acronym>DIAR4</acronym>
        <description>A disease characterized by severe, life-threatening watery diarrhea associated with generalized malabsorption and a paucity of enteroendocrine cells.</description>
        <dbReference type="MIM" id="610370"/>
    </disease>
    <text>The disease is caused by variants affecting the gene represented in this entry.</text>
</comment>
<accession>Q9Y4Z2</accession>
<accession>Q5VVI0</accession>
<accession>Q6DJX6</accession>
<accession>Q9BY24</accession>
<name>NGN3_HUMAN</name>
<evidence type="ECO:0000250" key="1"/>
<evidence type="ECO:0000250" key="2">
    <source>
        <dbReference type="UniProtKB" id="P70661"/>
    </source>
</evidence>
<evidence type="ECO:0000255" key="3">
    <source>
        <dbReference type="PROSITE-ProRule" id="PRU00981"/>
    </source>
</evidence>
<evidence type="ECO:0000256" key="4">
    <source>
        <dbReference type="SAM" id="MobiDB-lite"/>
    </source>
</evidence>
<evidence type="ECO:0000269" key="5">
    <source>
    </source>
</evidence>
<evidence type="ECO:0000269" key="6">
    <source>
    </source>
</evidence>
<evidence type="ECO:0000269" key="7">
    <source ref="1"/>
</evidence>
<evidence type="ECO:0000269" key="8">
    <source ref="2"/>
</evidence>
<evidence type="ECO:0000305" key="9"/>
<organism>
    <name type="scientific">Homo sapiens</name>
    <name type="common">Human</name>
    <dbReference type="NCBI Taxonomy" id="9606"/>
    <lineage>
        <taxon>Eukaryota</taxon>
        <taxon>Metazoa</taxon>
        <taxon>Chordata</taxon>
        <taxon>Craniata</taxon>
        <taxon>Vertebrata</taxon>
        <taxon>Euteleostomi</taxon>
        <taxon>Mammalia</taxon>
        <taxon>Eutheria</taxon>
        <taxon>Euarchontoglires</taxon>
        <taxon>Primates</taxon>
        <taxon>Haplorrhini</taxon>
        <taxon>Catarrhini</taxon>
        <taxon>Hominidae</taxon>
        <taxon>Homo</taxon>
    </lineage>
</organism>
<dbReference type="EMBL" id="AJ133776">
    <property type="protein sequence ID" value="CAB45384.1"/>
    <property type="molecule type" value="Genomic_DNA"/>
</dbReference>
<dbReference type="EMBL" id="AF234829">
    <property type="protein sequence ID" value="AAK15022.1"/>
    <property type="molecule type" value="Genomic_DNA"/>
</dbReference>
<dbReference type="EMBL" id="AK313952">
    <property type="protein sequence ID" value="BAG36669.1"/>
    <property type="molecule type" value="mRNA"/>
</dbReference>
<dbReference type="EMBL" id="AL450311">
    <property type="status" value="NOT_ANNOTATED_CDS"/>
    <property type="molecule type" value="Genomic_DNA"/>
</dbReference>
<dbReference type="EMBL" id="CH471083">
    <property type="protein sequence ID" value="EAW54328.1"/>
    <property type="molecule type" value="Genomic_DNA"/>
</dbReference>
<dbReference type="EMBL" id="BC074938">
    <property type="protein sequence ID" value="AAH74938.1"/>
    <property type="molecule type" value="mRNA"/>
</dbReference>
<dbReference type="EMBL" id="BC074939">
    <property type="protein sequence ID" value="AAH74939.1"/>
    <property type="molecule type" value="mRNA"/>
</dbReference>
<dbReference type="EMBL" id="BC117488">
    <property type="protein sequence ID" value="AAI17489.1"/>
    <property type="molecule type" value="mRNA"/>
</dbReference>
<dbReference type="EMBL" id="BC126468">
    <property type="protein sequence ID" value="AAI26469.1"/>
    <property type="molecule type" value="mRNA"/>
</dbReference>
<dbReference type="CCDS" id="CCDS31212.1"/>
<dbReference type="RefSeq" id="NP_066279.2">
    <property type="nucleotide sequence ID" value="NM_020999.4"/>
</dbReference>
<dbReference type="RefSeq" id="XP_016871769.1">
    <property type="nucleotide sequence ID" value="XM_017016280.2"/>
</dbReference>
<dbReference type="RefSeq" id="XP_054221941.1">
    <property type="nucleotide sequence ID" value="XM_054365966.1"/>
</dbReference>
<dbReference type="SMR" id="Q9Y4Z2"/>
<dbReference type="BioGRID" id="119118">
    <property type="interactions" value="159"/>
</dbReference>
<dbReference type="FunCoup" id="Q9Y4Z2">
    <property type="interactions" value="941"/>
</dbReference>
<dbReference type="IntAct" id="Q9Y4Z2">
    <property type="interactions" value="101"/>
</dbReference>
<dbReference type="STRING" id="9606.ENSP00000242462"/>
<dbReference type="iPTMnet" id="Q9Y4Z2"/>
<dbReference type="PhosphoSitePlus" id="Q9Y4Z2"/>
<dbReference type="BioMuta" id="NEUROG3"/>
<dbReference type="DMDM" id="229462908"/>
<dbReference type="MassIVE" id="Q9Y4Z2"/>
<dbReference type="PaxDb" id="9606-ENSP00000242462"/>
<dbReference type="PeptideAtlas" id="Q9Y4Z2"/>
<dbReference type="Antibodypedia" id="28907">
    <property type="antibodies" value="594 antibodies from 34 providers"/>
</dbReference>
<dbReference type="DNASU" id="50674"/>
<dbReference type="Ensembl" id="ENST00000242462.5">
    <property type="protein sequence ID" value="ENSP00000242462.4"/>
    <property type="gene ID" value="ENSG00000122859.5"/>
</dbReference>
<dbReference type="GeneID" id="50674"/>
<dbReference type="KEGG" id="hsa:50674"/>
<dbReference type="MANE-Select" id="ENST00000242462.5">
    <property type="protein sequence ID" value="ENSP00000242462.4"/>
    <property type="RefSeq nucleotide sequence ID" value="NM_020999.4"/>
    <property type="RefSeq protein sequence ID" value="NP_066279.2"/>
</dbReference>
<dbReference type="UCSC" id="uc001jpp.4">
    <property type="organism name" value="human"/>
</dbReference>
<dbReference type="AGR" id="HGNC:13806"/>
<dbReference type="CTD" id="50674"/>
<dbReference type="DisGeNET" id="50674"/>
<dbReference type="GeneCards" id="NEUROG3"/>
<dbReference type="HGNC" id="HGNC:13806">
    <property type="gene designation" value="NEUROG3"/>
</dbReference>
<dbReference type="HPA" id="ENSG00000122859">
    <property type="expression patterns" value="Group enriched (brain, intestine)"/>
</dbReference>
<dbReference type="MalaCards" id="NEUROG3"/>
<dbReference type="MIM" id="604882">
    <property type="type" value="gene"/>
</dbReference>
<dbReference type="MIM" id="610370">
    <property type="type" value="phenotype"/>
</dbReference>
<dbReference type="neXtProt" id="NX_Q9Y4Z2"/>
<dbReference type="OpenTargets" id="ENSG00000122859"/>
<dbReference type="Orphanet" id="83620">
    <property type="disease" value="Enteric anendocrinosis"/>
</dbReference>
<dbReference type="PharmGKB" id="PA31571"/>
<dbReference type="VEuPathDB" id="HostDB:ENSG00000122859"/>
<dbReference type="eggNOG" id="KOG3898">
    <property type="taxonomic scope" value="Eukaryota"/>
</dbReference>
<dbReference type="GeneTree" id="ENSGT00940000163077"/>
<dbReference type="HOGENOM" id="CLU_097959_1_0_1"/>
<dbReference type="InParanoid" id="Q9Y4Z2"/>
<dbReference type="OMA" id="ADHSFYG"/>
<dbReference type="OrthoDB" id="5969565at2759"/>
<dbReference type="PAN-GO" id="Q9Y4Z2">
    <property type="GO annotations" value="5 GO annotations based on evolutionary models"/>
</dbReference>
<dbReference type="PhylomeDB" id="Q9Y4Z2"/>
<dbReference type="TreeFam" id="TF315153"/>
<dbReference type="PathwayCommons" id="Q9Y4Z2"/>
<dbReference type="Reactome" id="R-HSA-210744">
    <property type="pathway name" value="Regulation of gene expression in late stage (branching morphogenesis) pancreatic bud precursor cells"/>
</dbReference>
<dbReference type="Reactome" id="R-HSA-210746">
    <property type="pathway name" value="Regulation of gene expression in endocrine-committed (NEUROG3+) progenitor cells"/>
</dbReference>
<dbReference type="SignaLink" id="Q9Y4Z2"/>
<dbReference type="SIGNOR" id="Q9Y4Z2"/>
<dbReference type="BioGRID-ORCS" id="50674">
    <property type="hits" value="32 hits in 1165 CRISPR screens"/>
</dbReference>
<dbReference type="GeneWiki" id="NEUROG3"/>
<dbReference type="GenomeRNAi" id="50674"/>
<dbReference type="Pharos" id="Q9Y4Z2">
    <property type="development level" value="Tbio"/>
</dbReference>
<dbReference type="PRO" id="PR:Q9Y4Z2"/>
<dbReference type="Proteomes" id="UP000005640">
    <property type="component" value="Chromosome 10"/>
</dbReference>
<dbReference type="RNAct" id="Q9Y4Z2">
    <property type="molecule type" value="protein"/>
</dbReference>
<dbReference type="Bgee" id="ENSG00000122859">
    <property type="expression patterns" value="Expressed in mucosa of transverse colon and 27 other cell types or tissues"/>
</dbReference>
<dbReference type="GO" id="GO:0000785">
    <property type="term" value="C:chromatin"/>
    <property type="evidence" value="ECO:0000247"/>
    <property type="project" value="NTNU_SB"/>
</dbReference>
<dbReference type="GO" id="GO:0005634">
    <property type="term" value="C:nucleus"/>
    <property type="evidence" value="ECO:0000314"/>
    <property type="project" value="UniProtKB"/>
</dbReference>
<dbReference type="GO" id="GO:0031490">
    <property type="term" value="F:chromatin DNA binding"/>
    <property type="evidence" value="ECO:0000250"/>
    <property type="project" value="UniProtKB"/>
</dbReference>
<dbReference type="GO" id="GO:0001228">
    <property type="term" value="F:DNA-binding transcription activator activity, RNA polymerase II-specific"/>
    <property type="evidence" value="ECO:0000250"/>
    <property type="project" value="UniProtKB"/>
</dbReference>
<dbReference type="GO" id="GO:0000981">
    <property type="term" value="F:DNA-binding transcription factor activity, RNA polymerase II-specific"/>
    <property type="evidence" value="ECO:0000247"/>
    <property type="project" value="NTNU_SB"/>
</dbReference>
<dbReference type="GO" id="GO:0001227">
    <property type="term" value="F:DNA-binding transcription repressor activity, RNA polymerase II-specific"/>
    <property type="evidence" value="ECO:0000314"/>
    <property type="project" value="NTNU_SB"/>
</dbReference>
<dbReference type="GO" id="GO:0070888">
    <property type="term" value="F:E-box binding"/>
    <property type="evidence" value="ECO:0000318"/>
    <property type="project" value="GO_Central"/>
</dbReference>
<dbReference type="GO" id="GO:0046983">
    <property type="term" value="F:protein dimerization activity"/>
    <property type="evidence" value="ECO:0007669"/>
    <property type="project" value="InterPro"/>
</dbReference>
<dbReference type="GO" id="GO:0000978">
    <property type="term" value="F:RNA polymerase II cis-regulatory region sequence-specific DNA binding"/>
    <property type="evidence" value="ECO:0000314"/>
    <property type="project" value="NTNU_SB"/>
</dbReference>
<dbReference type="GO" id="GO:0061564">
    <property type="term" value="P:axon development"/>
    <property type="evidence" value="ECO:0000318"/>
    <property type="project" value="GO_Central"/>
</dbReference>
<dbReference type="GO" id="GO:0007417">
    <property type="term" value="P:central nervous system development"/>
    <property type="evidence" value="ECO:0000304"/>
    <property type="project" value="ProtInc"/>
</dbReference>
<dbReference type="GO" id="GO:0030855">
    <property type="term" value="P:epithelial cell differentiation"/>
    <property type="evidence" value="ECO:0007669"/>
    <property type="project" value="Ensembl"/>
</dbReference>
<dbReference type="GO" id="GO:0030900">
    <property type="term" value="P:forebrain development"/>
    <property type="evidence" value="ECO:0007669"/>
    <property type="project" value="Ensembl"/>
</dbReference>
<dbReference type="GO" id="GO:0030902">
    <property type="term" value="P:hindbrain development"/>
    <property type="evidence" value="ECO:0007669"/>
    <property type="project" value="Ensembl"/>
</dbReference>
<dbReference type="GO" id="GO:0000122">
    <property type="term" value="P:negative regulation of transcription by RNA polymerase II"/>
    <property type="evidence" value="ECO:0000314"/>
    <property type="project" value="NTNU_SB"/>
</dbReference>
<dbReference type="GO" id="GO:0007399">
    <property type="term" value="P:nervous system development"/>
    <property type="evidence" value="ECO:0000304"/>
    <property type="project" value="ProtInc"/>
</dbReference>
<dbReference type="GO" id="GO:0007422">
    <property type="term" value="P:peripheral nervous system development"/>
    <property type="evidence" value="ECO:0000304"/>
    <property type="project" value="ProtInc"/>
</dbReference>
<dbReference type="GO" id="GO:0045893">
    <property type="term" value="P:positive regulation of DNA-templated transcription"/>
    <property type="evidence" value="ECO:0000250"/>
    <property type="project" value="UniProtKB"/>
</dbReference>
<dbReference type="GO" id="GO:0045666">
    <property type="term" value="P:positive regulation of neuron differentiation"/>
    <property type="evidence" value="ECO:0007669"/>
    <property type="project" value="Ensembl"/>
</dbReference>
<dbReference type="GO" id="GO:0045944">
    <property type="term" value="P:positive regulation of transcription by RNA polymerase II"/>
    <property type="evidence" value="ECO:0000314"/>
    <property type="project" value="UniProtKB"/>
</dbReference>
<dbReference type="GO" id="GO:0048814">
    <property type="term" value="P:regulation of dendrite morphogenesis"/>
    <property type="evidence" value="ECO:0007669"/>
    <property type="project" value="Ensembl"/>
</dbReference>
<dbReference type="GO" id="GO:0007423">
    <property type="term" value="P:sensory organ development"/>
    <property type="evidence" value="ECO:0000318"/>
    <property type="project" value="GO_Central"/>
</dbReference>
<dbReference type="GO" id="GO:0021510">
    <property type="term" value="P:spinal cord development"/>
    <property type="evidence" value="ECO:0007669"/>
    <property type="project" value="Ensembl"/>
</dbReference>
<dbReference type="GO" id="GO:0060290">
    <property type="term" value="P:transdifferentiation"/>
    <property type="evidence" value="ECO:0000250"/>
    <property type="project" value="UniProtKB"/>
</dbReference>
<dbReference type="CDD" id="cd19718">
    <property type="entry name" value="bHLH_TS_NGN3_ATOH5"/>
    <property type="match status" value="1"/>
</dbReference>
<dbReference type="FunFam" id="4.10.280.10:FF:000006">
    <property type="entry name" value="Neurogenic differentiation factor"/>
    <property type="match status" value="1"/>
</dbReference>
<dbReference type="Gene3D" id="4.10.280.10">
    <property type="entry name" value="Helix-loop-helix DNA-binding domain"/>
    <property type="match status" value="1"/>
</dbReference>
<dbReference type="InterPro" id="IPR011598">
    <property type="entry name" value="bHLH_dom"/>
</dbReference>
<dbReference type="InterPro" id="IPR050359">
    <property type="entry name" value="bHLH_transcription_factors"/>
</dbReference>
<dbReference type="InterPro" id="IPR036638">
    <property type="entry name" value="HLH_DNA-bd_sf"/>
</dbReference>
<dbReference type="InterPro" id="IPR032656">
    <property type="entry name" value="Ngn3_bHLH"/>
</dbReference>
<dbReference type="PANTHER" id="PTHR19290">
    <property type="entry name" value="BASIC HELIX-LOOP-HELIX PROTEIN NEUROGENIN-RELATED"/>
    <property type="match status" value="1"/>
</dbReference>
<dbReference type="PANTHER" id="PTHR19290:SF94">
    <property type="entry name" value="NEUROGENIN-3"/>
    <property type="match status" value="1"/>
</dbReference>
<dbReference type="Pfam" id="PF00010">
    <property type="entry name" value="HLH"/>
    <property type="match status" value="1"/>
</dbReference>
<dbReference type="SMART" id="SM00353">
    <property type="entry name" value="HLH"/>
    <property type="match status" value="1"/>
</dbReference>
<dbReference type="SUPFAM" id="SSF47459">
    <property type="entry name" value="HLH, helix-loop-helix DNA-binding domain"/>
    <property type="match status" value="1"/>
</dbReference>
<dbReference type="PROSITE" id="PS50888">
    <property type="entry name" value="BHLH"/>
    <property type="match status" value="1"/>
</dbReference>
<protein>
    <recommendedName>
        <fullName>Neurogenin-3</fullName>
        <shortName>NGN-3</shortName>
    </recommendedName>
    <alternativeName>
        <fullName>Class A basic helix-loop-helix protein 7</fullName>
        <shortName>bHLHa7</shortName>
    </alternativeName>
    <alternativeName>
        <fullName>Protein atonal homolog 5</fullName>
    </alternativeName>
</protein>